<gene>
    <name evidence="1" type="primary">eco</name>
    <name type="ordered locus">ECIAI1_2293</name>
</gene>
<dbReference type="EMBL" id="CU928160">
    <property type="protein sequence ID" value="CAQ99137.1"/>
    <property type="molecule type" value="Genomic_DNA"/>
</dbReference>
<dbReference type="SMR" id="B7M5Q0"/>
<dbReference type="MEROPS" id="I11.001"/>
<dbReference type="KEGG" id="ecr:ECIAI1_2293"/>
<dbReference type="HOGENOM" id="CLU_111565_0_0_6"/>
<dbReference type="GO" id="GO:0042597">
    <property type="term" value="C:periplasmic space"/>
    <property type="evidence" value="ECO:0007669"/>
    <property type="project" value="UniProtKB-SubCell"/>
</dbReference>
<dbReference type="GO" id="GO:0004867">
    <property type="term" value="F:serine-type endopeptidase inhibitor activity"/>
    <property type="evidence" value="ECO:0007669"/>
    <property type="project" value="UniProtKB-UniRule"/>
</dbReference>
<dbReference type="CDD" id="cd00242">
    <property type="entry name" value="Ecotin"/>
    <property type="match status" value="1"/>
</dbReference>
<dbReference type="FunFam" id="2.60.40.550:FF:000001">
    <property type="entry name" value="Ecotin"/>
    <property type="match status" value="1"/>
</dbReference>
<dbReference type="FunFam" id="4.10.1230.10:FF:000001">
    <property type="entry name" value="Ecotin"/>
    <property type="match status" value="1"/>
</dbReference>
<dbReference type="Gene3D" id="2.60.40.550">
    <property type="entry name" value="Ecotin"/>
    <property type="match status" value="1"/>
</dbReference>
<dbReference type="Gene3D" id="4.10.1230.10">
    <property type="entry name" value="Ecotin, trypsin inhibitor"/>
    <property type="match status" value="1"/>
</dbReference>
<dbReference type="HAMAP" id="MF_00706">
    <property type="entry name" value="Ecotin"/>
    <property type="match status" value="1"/>
</dbReference>
<dbReference type="InterPro" id="IPR027438">
    <property type="entry name" value="Ecotin_C"/>
</dbReference>
<dbReference type="InterPro" id="IPR036198">
    <property type="entry name" value="Ecotin_sf"/>
</dbReference>
<dbReference type="InterPro" id="IPR005658">
    <property type="entry name" value="Prot_inh_ecotin"/>
</dbReference>
<dbReference type="InterPro" id="IPR023084">
    <property type="entry name" value="Prot_inh_ecotin_gammaproteobac"/>
</dbReference>
<dbReference type="NCBIfam" id="NF002987">
    <property type="entry name" value="PRK03719.1"/>
    <property type="match status" value="1"/>
</dbReference>
<dbReference type="PANTHER" id="PTHR35890">
    <property type="match status" value="1"/>
</dbReference>
<dbReference type="PANTHER" id="PTHR35890:SF3">
    <property type="entry name" value="ECOTIN"/>
    <property type="match status" value="1"/>
</dbReference>
<dbReference type="Pfam" id="PF03974">
    <property type="entry name" value="Ecotin"/>
    <property type="match status" value="1"/>
</dbReference>
<dbReference type="PIRSF" id="PIRSF006865">
    <property type="entry name" value="Prot_inh_ecotin"/>
    <property type="match status" value="1"/>
</dbReference>
<dbReference type="SUPFAM" id="SSF49772">
    <property type="entry name" value="Ecotin, trypsin inhibitor"/>
    <property type="match status" value="1"/>
</dbReference>
<feature type="signal peptide" evidence="1">
    <location>
        <begin position="1"/>
        <end position="20"/>
    </location>
</feature>
<feature type="chain" id="PRO_1000132358" description="Ecotin">
    <location>
        <begin position="21"/>
        <end position="162"/>
    </location>
</feature>
<feature type="site" description="Reactive bond" evidence="1">
    <location>
        <begin position="104"/>
        <end position="105"/>
    </location>
</feature>
<feature type="disulfide bond" evidence="1">
    <location>
        <begin position="70"/>
        <end position="107"/>
    </location>
</feature>
<sequence length="162" mass="18192">MKTILPAVLFAAFATTSAWAAESVQPLEKIAPYPQAEKGMKRQVIQLTPQEDESTLKVELLIGQTLEVDCNLHRLGGKLENKTLEGWGYDYYVFDKVSSPVSTMMACPDGKKEKKFVTAYLGDAGMLRYNSKLPIVVYTPDNVDVKYRVWKAEEKIDNAVVR</sequence>
<protein>
    <recommendedName>
        <fullName evidence="1">Ecotin</fullName>
    </recommendedName>
</protein>
<name>ECOT_ECO8A</name>
<accession>B7M5Q0</accession>
<proteinExistence type="inferred from homology"/>
<reference key="1">
    <citation type="journal article" date="2009" name="PLoS Genet.">
        <title>Organised genome dynamics in the Escherichia coli species results in highly diverse adaptive paths.</title>
        <authorList>
            <person name="Touchon M."/>
            <person name="Hoede C."/>
            <person name="Tenaillon O."/>
            <person name="Barbe V."/>
            <person name="Baeriswyl S."/>
            <person name="Bidet P."/>
            <person name="Bingen E."/>
            <person name="Bonacorsi S."/>
            <person name="Bouchier C."/>
            <person name="Bouvet O."/>
            <person name="Calteau A."/>
            <person name="Chiapello H."/>
            <person name="Clermont O."/>
            <person name="Cruveiller S."/>
            <person name="Danchin A."/>
            <person name="Diard M."/>
            <person name="Dossat C."/>
            <person name="Karoui M.E."/>
            <person name="Frapy E."/>
            <person name="Garry L."/>
            <person name="Ghigo J.M."/>
            <person name="Gilles A.M."/>
            <person name="Johnson J."/>
            <person name="Le Bouguenec C."/>
            <person name="Lescat M."/>
            <person name="Mangenot S."/>
            <person name="Martinez-Jehanne V."/>
            <person name="Matic I."/>
            <person name="Nassif X."/>
            <person name="Oztas S."/>
            <person name="Petit M.A."/>
            <person name="Pichon C."/>
            <person name="Rouy Z."/>
            <person name="Ruf C.S."/>
            <person name="Schneider D."/>
            <person name="Tourret J."/>
            <person name="Vacherie B."/>
            <person name="Vallenet D."/>
            <person name="Medigue C."/>
            <person name="Rocha E.P.C."/>
            <person name="Denamur E."/>
        </authorList>
    </citation>
    <scope>NUCLEOTIDE SEQUENCE [LARGE SCALE GENOMIC DNA]</scope>
    <source>
        <strain>IAI1</strain>
    </source>
</reference>
<keyword id="KW-1015">Disulfide bond</keyword>
<keyword id="KW-0574">Periplasm</keyword>
<keyword id="KW-0646">Protease inhibitor</keyword>
<keyword id="KW-0722">Serine protease inhibitor</keyword>
<keyword id="KW-0732">Signal</keyword>
<comment type="function">
    <text evidence="1">General inhibitor of pancreatic serine proteases: inhibits chymotrypsin, trypsin, elastases, factor X, kallikrein as well as a variety of other proteases.</text>
</comment>
<comment type="subunit">
    <text evidence="1">Homodimer.</text>
</comment>
<comment type="subcellular location">
    <subcellularLocation>
        <location evidence="1">Periplasm</location>
    </subcellularLocation>
</comment>
<comment type="similarity">
    <text evidence="1">Belongs to the protease inhibitor I11 (ecotin) family.</text>
</comment>
<organism>
    <name type="scientific">Escherichia coli O8 (strain IAI1)</name>
    <dbReference type="NCBI Taxonomy" id="585034"/>
    <lineage>
        <taxon>Bacteria</taxon>
        <taxon>Pseudomonadati</taxon>
        <taxon>Pseudomonadota</taxon>
        <taxon>Gammaproteobacteria</taxon>
        <taxon>Enterobacterales</taxon>
        <taxon>Enterobacteriaceae</taxon>
        <taxon>Escherichia</taxon>
    </lineage>
</organism>
<evidence type="ECO:0000255" key="1">
    <source>
        <dbReference type="HAMAP-Rule" id="MF_00706"/>
    </source>
</evidence>